<comment type="function">
    <text evidence="1">Catalyzes the phosphorylation of the position 2 hydroxy group of 4-diphosphocytidyl-2C-methyl-D-erythritol.</text>
</comment>
<comment type="catalytic activity">
    <reaction evidence="1">
        <text>4-CDP-2-C-methyl-D-erythritol + ATP = 4-CDP-2-C-methyl-D-erythritol 2-phosphate + ADP + H(+)</text>
        <dbReference type="Rhea" id="RHEA:18437"/>
        <dbReference type="ChEBI" id="CHEBI:15378"/>
        <dbReference type="ChEBI" id="CHEBI:30616"/>
        <dbReference type="ChEBI" id="CHEBI:57823"/>
        <dbReference type="ChEBI" id="CHEBI:57919"/>
        <dbReference type="ChEBI" id="CHEBI:456216"/>
        <dbReference type="EC" id="2.7.1.148"/>
    </reaction>
</comment>
<comment type="pathway">
    <text evidence="1">Isoprenoid biosynthesis; isopentenyl diphosphate biosynthesis via DXP pathway; isopentenyl diphosphate from 1-deoxy-D-xylulose 5-phosphate: step 3/6.</text>
</comment>
<comment type="similarity">
    <text evidence="1">Belongs to the GHMP kinase family. IspE subfamily.</text>
</comment>
<keyword id="KW-0067">ATP-binding</keyword>
<keyword id="KW-0414">Isoprene biosynthesis</keyword>
<keyword id="KW-0418">Kinase</keyword>
<keyword id="KW-0547">Nucleotide-binding</keyword>
<keyword id="KW-0808">Transferase</keyword>
<organism>
    <name type="scientific">Hydrogenobaculum sp. (strain Y04AAS1)</name>
    <dbReference type="NCBI Taxonomy" id="380749"/>
    <lineage>
        <taxon>Bacteria</taxon>
        <taxon>Pseudomonadati</taxon>
        <taxon>Aquificota</taxon>
        <taxon>Aquificia</taxon>
        <taxon>Aquificales</taxon>
        <taxon>Aquificaceae</taxon>
        <taxon>Hydrogenobaculum</taxon>
    </lineage>
</organism>
<evidence type="ECO:0000255" key="1">
    <source>
        <dbReference type="HAMAP-Rule" id="MF_00061"/>
    </source>
</evidence>
<gene>
    <name evidence="1" type="primary">ispE</name>
    <name type="ordered locus">HY04AAS1_1414</name>
</gene>
<protein>
    <recommendedName>
        <fullName evidence="1">4-diphosphocytidyl-2-C-methyl-D-erythritol kinase</fullName>
        <shortName evidence="1">CMK</shortName>
        <ecNumber evidence="1">2.7.1.148</ecNumber>
    </recommendedName>
    <alternativeName>
        <fullName evidence="1">4-(cytidine-5'-diphospho)-2-C-methyl-D-erythritol kinase</fullName>
    </alternativeName>
</protein>
<name>ISPE_HYDS0</name>
<reference key="1">
    <citation type="journal article" date="2009" name="J. Bacteriol.">
        <title>Complete and draft genome sequences of six members of the Aquificales.</title>
        <authorList>
            <person name="Reysenbach A.-L."/>
            <person name="Hamamura N."/>
            <person name="Podar M."/>
            <person name="Griffiths E."/>
            <person name="Ferreira S."/>
            <person name="Hochstein R."/>
            <person name="Heidelberg J."/>
            <person name="Johnson J."/>
            <person name="Mead D."/>
            <person name="Pohorille A."/>
            <person name="Sarmiento M."/>
            <person name="Schweighofer K."/>
            <person name="Seshadri R."/>
            <person name="Voytek M.A."/>
        </authorList>
    </citation>
    <scope>NUCLEOTIDE SEQUENCE [LARGE SCALE GENOMIC DNA]</scope>
    <source>
        <strain>Y04AAS1</strain>
    </source>
</reference>
<feature type="chain" id="PRO_1000116932" description="4-diphosphocytidyl-2-C-methyl-D-erythritol kinase">
    <location>
        <begin position="1"/>
        <end position="284"/>
    </location>
</feature>
<feature type="active site" evidence="1">
    <location>
        <position position="22"/>
    </location>
</feature>
<feature type="active site" evidence="1">
    <location>
        <position position="146"/>
    </location>
</feature>
<feature type="binding site" evidence="1">
    <location>
        <begin position="104"/>
        <end position="114"/>
    </location>
    <ligand>
        <name>ATP</name>
        <dbReference type="ChEBI" id="CHEBI:30616"/>
    </ligand>
</feature>
<dbReference type="EC" id="2.7.1.148" evidence="1"/>
<dbReference type="EMBL" id="CP001130">
    <property type="protein sequence ID" value="ACG58099.1"/>
    <property type="molecule type" value="Genomic_DNA"/>
</dbReference>
<dbReference type="RefSeq" id="WP_012514455.1">
    <property type="nucleotide sequence ID" value="NC_011126.1"/>
</dbReference>
<dbReference type="SMR" id="B4U5Q9"/>
<dbReference type="STRING" id="380749.HY04AAS1_1414"/>
<dbReference type="KEGG" id="hya:HY04AAS1_1414"/>
<dbReference type="eggNOG" id="COG1947">
    <property type="taxonomic scope" value="Bacteria"/>
</dbReference>
<dbReference type="HOGENOM" id="CLU_053057_2_0_0"/>
<dbReference type="OrthoDB" id="9809438at2"/>
<dbReference type="UniPathway" id="UPA00056">
    <property type="reaction ID" value="UER00094"/>
</dbReference>
<dbReference type="GO" id="GO:0050515">
    <property type="term" value="F:4-(cytidine 5'-diphospho)-2-C-methyl-D-erythritol kinase activity"/>
    <property type="evidence" value="ECO:0007669"/>
    <property type="project" value="UniProtKB-UniRule"/>
</dbReference>
<dbReference type="GO" id="GO:0005524">
    <property type="term" value="F:ATP binding"/>
    <property type="evidence" value="ECO:0007669"/>
    <property type="project" value="UniProtKB-UniRule"/>
</dbReference>
<dbReference type="GO" id="GO:0019288">
    <property type="term" value="P:isopentenyl diphosphate biosynthetic process, methylerythritol 4-phosphate pathway"/>
    <property type="evidence" value="ECO:0007669"/>
    <property type="project" value="UniProtKB-UniRule"/>
</dbReference>
<dbReference type="GO" id="GO:0016114">
    <property type="term" value="P:terpenoid biosynthetic process"/>
    <property type="evidence" value="ECO:0007669"/>
    <property type="project" value="InterPro"/>
</dbReference>
<dbReference type="Gene3D" id="3.30.230.10">
    <property type="match status" value="1"/>
</dbReference>
<dbReference type="Gene3D" id="3.30.70.890">
    <property type="entry name" value="GHMP kinase, C-terminal domain"/>
    <property type="match status" value="1"/>
</dbReference>
<dbReference type="HAMAP" id="MF_00061">
    <property type="entry name" value="IspE"/>
    <property type="match status" value="1"/>
</dbReference>
<dbReference type="InterPro" id="IPR013750">
    <property type="entry name" value="GHMP_kinase_C_dom"/>
</dbReference>
<dbReference type="InterPro" id="IPR036554">
    <property type="entry name" value="GHMP_kinase_C_sf"/>
</dbReference>
<dbReference type="InterPro" id="IPR006204">
    <property type="entry name" value="GHMP_kinase_N_dom"/>
</dbReference>
<dbReference type="InterPro" id="IPR004424">
    <property type="entry name" value="IspE"/>
</dbReference>
<dbReference type="InterPro" id="IPR020568">
    <property type="entry name" value="Ribosomal_Su5_D2-typ_SF"/>
</dbReference>
<dbReference type="InterPro" id="IPR014721">
    <property type="entry name" value="Ribsml_uS5_D2-typ_fold_subgr"/>
</dbReference>
<dbReference type="NCBIfam" id="NF011205">
    <property type="entry name" value="PRK14611.1"/>
    <property type="match status" value="1"/>
</dbReference>
<dbReference type="PANTHER" id="PTHR43527">
    <property type="entry name" value="4-DIPHOSPHOCYTIDYL-2-C-METHYL-D-ERYTHRITOL KINASE, CHLOROPLASTIC"/>
    <property type="match status" value="1"/>
</dbReference>
<dbReference type="PANTHER" id="PTHR43527:SF2">
    <property type="entry name" value="4-DIPHOSPHOCYTIDYL-2-C-METHYL-D-ERYTHRITOL KINASE, CHLOROPLASTIC"/>
    <property type="match status" value="1"/>
</dbReference>
<dbReference type="Pfam" id="PF08544">
    <property type="entry name" value="GHMP_kinases_C"/>
    <property type="match status" value="1"/>
</dbReference>
<dbReference type="Pfam" id="PF00288">
    <property type="entry name" value="GHMP_kinases_N"/>
    <property type="match status" value="1"/>
</dbReference>
<dbReference type="PIRSF" id="PIRSF010376">
    <property type="entry name" value="IspE"/>
    <property type="match status" value="1"/>
</dbReference>
<dbReference type="SUPFAM" id="SSF55060">
    <property type="entry name" value="GHMP Kinase, C-terminal domain"/>
    <property type="match status" value="1"/>
</dbReference>
<dbReference type="SUPFAM" id="SSF54211">
    <property type="entry name" value="Ribosomal protein S5 domain 2-like"/>
    <property type="match status" value="1"/>
</dbReference>
<accession>B4U5Q9</accession>
<sequence>MNKKNNLLVLEDGVKVILAPAKVNFGLWIKGKRPDGYHDIFSIIHTIDLYDRIYIELHYTLEVLSVGPFSKNLKDNIVYEGVLAFSRLTGKNFDYKIVIEKNIPVGAGLGGASSDLAAVISYLNEELENPMKEQELTDFLSSFSKDAPFFLKGGCALVYGTGDQVKVLEPISREITVVYPNIEASTSKVYGAFTKQTEEVLLLEDILRLLEENDIENIIENHLQETAIEIYKEIGELIRFLESVGYKPYMSGSGSSVYVFGKLSDKIKMALESRGWYVYECKTI</sequence>
<proteinExistence type="inferred from homology"/>